<reference key="1">
    <citation type="journal article" date="2007" name="PLoS ONE">
        <title>Molecular correlates of host specialization in Staphylococcus aureus.</title>
        <authorList>
            <person name="Herron-Olson L."/>
            <person name="Fitzgerald J.R."/>
            <person name="Musser J.M."/>
            <person name="Kapur V."/>
        </authorList>
    </citation>
    <scope>NUCLEOTIDE SEQUENCE [LARGE SCALE GENOMIC DNA]</scope>
    <source>
        <strain>bovine RF122 / ET3-1</strain>
    </source>
</reference>
<feature type="chain" id="PRO_1000024673" description="ATP-dependent Clp protease ATP-binding subunit ClpX">
    <location>
        <begin position="1"/>
        <end position="420"/>
    </location>
</feature>
<feature type="domain" description="ClpX-type ZB" evidence="2">
    <location>
        <begin position="1"/>
        <end position="54"/>
    </location>
</feature>
<feature type="binding site" evidence="2">
    <location>
        <position position="13"/>
    </location>
    <ligand>
        <name>Zn(2+)</name>
        <dbReference type="ChEBI" id="CHEBI:29105"/>
    </ligand>
</feature>
<feature type="binding site" evidence="2">
    <location>
        <position position="16"/>
    </location>
    <ligand>
        <name>Zn(2+)</name>
        <dbReference type="ChEBI" id="CHEBI:29105"/>
    </ligand>
</feature>
<feature type="binding site" evidence="2">
    <location>
        <position position="35"/>
    </location>
    <ligand>
        <name>Zn(2+)</name>
        <dbReference type="ChEBI" id="CHEBI:29105"/>
    </ligand>
</feature>
<feature type="binding site" evidence="2">
    <location>
        <position position="38"/>
    </location>
    <ligand>
        <name>Zn(2+)</name>
        <dbReference type="ChEBI" id="CHEBI:29105"/>
    </ligand>
</feature>
<feature type="binding site" evidence="1">
    <location>
        <begin position="118"/>
        <end position="125"/>
    </location>
    <ligand>
        <name>ATP</name>
        <dbReference type="ChEBI" id="CHEBI:30616"/>
    </ligand>
</feature>
<sequence>MFKFNEDEENLKCSFCGKDQDQVKKLVAGSGVYICNECIELCSEIVEEELAQNTSEAITELPTPKEIMDHLNEYVIGQEKAKKSLAVAVYNHYKRIQQLGPKEDDVELQKSNIALIGPTGSGKTLLAQTLAKTLNVPFAIADATSLTEAGYVGDDVENILLRLIQAADFDIDKAEKGIIYVDEIDKIARKSENTSITRDVSGEGVQQALLKILEGTTASVPPQGGRKHPNQEMIQIDTTNILFILGGAFDGIEDVIKRRLGEKVIGFSSNEADKYDEQALLAQIRPEDLQAYGLIPEFIGRVPIVANLETLDVTALKNILTQPKNALVKQYTKMLELDDVDLEFTEEALSAISEKAIERKTGARGLRSIIEETLIDIMFDVPSNENVTKVVITAQTINEETEPELYDAEGNLINNSKTSA</sequence>
<evidence type="ECO:0000255" key="1">
    <source>
        <dbReference type="HAMAP-Rule" id="MF_00175"/>
    </source>
</evidence>
<evidence type="ECO:0000255" key="2">
    <source>
        <dbReference type="PROSITE-ProRule" id="PRU01250"/>
    </source>
</evidence>
<name>CLPX_STAAB</name>
<accession>Q2YTB5</accession>
<comment type="function">
    <text evidence="1">ATP-dependent specificity component of the Clp protease. It directs the protease to specific substrates. Can perform chaperone functions in the absence of ClpP.</text>
</comment>
<comment type="subunit">
    <text evidence="1">Component of the ClpX-ClpP complex. Forms a hexameric ring that, in the presence of ATP, binds to fourteen ClpP subunits assembled into a disk-like structure with a central cavity, resembling the structure of eukaryotic proteasomes.</text>
</comment>
<comment type="similarity">
    <text evidence="1">Belongs to the ClpX chaperone family.</text>
</comment>
<dbReference type="EMBL" id="AJ938182">
    <property type="protein sequence ID" value="CAI81223.1"/>
    <property type="molecule type" value="Genomic_DNA"/>
</dbReference>
<dbReference type="RefSeq" id="WP_000472292.1">
    <property type="nucleotide sequence ID" value="NC_007622.1"/>
</dbReference>
<dbReference type="SMR" id="Q2YTB5"/>
<dbReference type="KEGG" id="sab:SAB1534c"/>
<dbReference type="HOGENOM" id="CLU_014218_8_2_9"/>
<dbReference type="GO" id="GO:0009376">
    <property type="term" value="C:HslUV protease complex"/>
    <property type="evidence" value="ECO:0007669"/>
    <property type="project" value="TreeGrafter"/>
</dbReference>
<dbReference type="GO" id="GO:0005524">
    <property type="term" value="F:ATP binding"/>
    <property type="evidence" value="ECO:0007669"/>
    <property type="project" value="UniProtKB-UniRule"/>
</dbReference>
<dbReference type="GO" id="GO:0016887">
    <property type="term" value="F:ATP hydrolysis activity"/>
    <property type="evidence" value="ECO:0007669"/>
    <property type="project" value="InterPro"/>
</dbReference>
<dbReference type="GO" id="GO:0140662">
    <property type="term" value="F:ATP-dependent protein folding chaperone"/>
    <property type="evidence" value="ECO:0007669"/>
    <property type="project" value="InterPro"/>
</dbReference>
<dbReference type="GO" id="GO:0046983">
    <property type="term" value="F:protein dimerization activity"/>
    <property type="evidence" value="ECO:0007669"/>
    <property type="project" value="InterPro"/>
</dbReference>
<dbReference type="GO" id="GO:0051082">
    <property type="term" value="F:unfolded protein binding"/>
    <property type="evidence" value="ECO:0007669"/>
    <property type="project" value="UniProtKB-UniRule"/>
</dbReference>
<dbReference type="GO" id="GO:0008270">
    <property type="term" value="F:zinc ion binding"/>
    <property type="evidence" value="ECO:0007669"/>
    <property type="project" value="InterPro"/>
</dbReference>
<dbReference type="GO" id="GO:0051301">
    <property type="term" value="P:cell division"/>
    <property type="evidence" value="ECO:0007669"/>
    <property type="project" value="TreeGrafter"/>
</dbReference>
<dbReference type="GO" id="GO:0051603">
    <property type="term" value="P:proteolysis involved in protein catabolic process"/>
    <property type="evidence" value="ECO:0007669"/>
    <property type="project" value="TreeGrafter"/>
</dbReference>
<dbReference type="CDD" id="cd19497">
    <property type="entry name" value="RecA-like_ClpX"/>
    <property type="match status" value="1"/>
</dbReference>
<dbReference type="FunFam" id="1.10.8.60:FF:000002">
    <property type="entry name" value="ATP-dependent Clp protease ATP-binding subunit ClpX"/>
    <property type="match status" value="1"/>
</dbReference>
<dbReference type="FunFam" id="3.40.50.300:FF:000005">
    <property type="entry name" value="ATP-dependent Clp protease ATP-binding subunit ClpX"/>
    <property type="match status" value="1"/>
</dbReference>
<dbReference type="Gene3D" id="1.10.8.60">
    <property type="match status" value="1"/>
</dbReference>
<dbReference type="Gene3D" id="6.20.220.10">
    <property type="entry name" value="ClpX chaperone, C4-type zinc finger domain"/>
    <property type="match status" value="1"/>
</dbReference>
<dbReference type="Gene3D" id="3.40.50.300">
    <property type="entry name" value="P-loop containing nucleotide triphosphate hydrolases"/>
    <property type="match status" value="1"/>
</dbReference>
<dbReference type="HAMAP" id="MF_00175">
    <property type="entry name" value="ClpX"/>
    <property type="match status" value="1"/>
</dbReference>
<dbReference type="InterPro" id="IPR003593">
    <property type="entry name" value="AAA+_ATPase"/>
</dbReference>
<dbReference type="InterPro" id="IPR050052">
    <property type="entry name" value="ATP-dep_Clp_protease_ClpX"/>
</dbReference>
<dbReference type="InterPro" id="IPR003959">
    <property type="entry name" value="ATPase_AAA_core"/>
</dbReference>
<dbReference type="InterPro" id="IPR019489">
    <property type="entry name" value="Clp_ATPase_C"/>
</dbReference>
<dbReference type="InterPro" id="IPR004487">
    <property type="entry name" value="Clp_protease_ATP-bd_su_ClpX"/>
</dbReference>
<dbReference type="InterPro" id="IPR046425">
    <property type="entry name" value="ClpX_bact"/>
</dbReference>
<dbReference type="InterPro" id="IPR027417">
    <property type="entry name" value="P-loop_NTPase"/>
</dbReference>
<dbReference type="InterPro" id="IPR010603">
    <property type="entry name" value="Znf_CppX_C4"/>
</dbReference>
<dbReference type="InterPro" id="IPR038366">
    <property type="entry name" value="Znf_CppX_C4_sf"/>
</dbReference>
<dbReference type="NCBIfam" id="TIGR00382">
    <property type="entry name" value="clpX"/>
    <property type="match status" value="1"/>
</dbReference>
<dbReference type="NCBIfam" id="NF003745">
    <property type="entry name" value="PRK05342.1"/>
    <property type="match status" value="1"/>
</dbReference>
<dbReference type="PANTHER" id="PTHR48102:SF7">
    <property type="entry name" value="ATP-DEPENDENT CLP PROTEASE ATP-BINDING SUBUNIT CLPX-LIKE, MITOCHONDRIAL"/>
    <property type="match status" value="1"/>
</dbReference>
<dbReference type="PANTHER" id="PTHR48102">
    <property type="entry name" value="ATP-DEPENDENT CLP PROTEASE ATP-BINDING SUBUNIT CLPX-LIKE, MITOCHONDRIAL-RELATED"/>
    <property type="match status" value="1"/>
</dbReference>
<dbReference type="Pfam" id="PF07724">
    <property type="entry name" value="AAA_2"/>
    <property type="match status" value="1"/>
</dbReference>
<dbReference type="Pfam" id="PF10431">
    <property type="entry name" value="ClpB_D2-small"/>
    <property type="match status" value="1"/>
</dbReference>
<dbReference type="Pfam" id="PF06689">
    <property type="entry name" value="zf-C4_ClpX"/>
    <property type="match status" value="1"/>
</dbReference>
<dbReference type="SMART" id="SM00382">
    <property type="entry name" value="AAA"/>
    <property type="match status" value="1"/>
</dbReference>
<dbReference type="SMART" id="SM01086">
    <property type="entry name" value="ClpB_D2-small"/>
    <property type="match status" value="1"/>
</dbReference>
<dbReference type="SMART" id="SM00994">
    <property type="entry name" value="zf-C4_ClpX"/>
    <property type="match status" value="1"/>
</dbReference>
<dbReference type="SUPFAM" id="SSF57716">
    <property type="entry name" value="Glucocorticoid receptor-like (DNA-binding domain)"/>
    <property type="match status" value="1"/>
</dbReference>
<dbReference type="SUPFAM" id="SSF52540">
    <property type="entry name" value="P-loop containing nucleoside triphosphate hydrolases"/>
    <property type="match status" value="1"/>
</dbReference>
<dbReference type="PROSITE" id="PS51902">
    <property type="entry name" value="CLPX_ZB"/>
    <property type="match status" value="1"/>
</dbReference>
<proteinExistence type="inferred from homology"/>
<protein>
    <recommendedName>
        <fullName evidence="1">ATP-dependent Clp protease ATP-binding subunit ClpX</fullName>
    </recommendedName>
</protein>
<organism>
    <name type="scientific">Staphylococcus aureus (strain bovine RF122 / ET3-1)</name>
    <dbReference type="NCBI Taxonomy" id="273036"/>
    <lineage>
        <taxon>Bacteria</taxon>
        <taxon>Bacillati</taxon>
        <taxon>Bacillota</taxon>
        <taxon>Bacilli</taxon>
        <taxon>Bacillales</taxon>
        <taxon>Staphylococcaceae</taxon>
        <taxon>Staphylococcus</taxon>
    </lineage>
</organism>
<keyword id="KW-0067">ATP-binding</keyword>
<keyword id="KW-0143">Chaperone</keyword>
<keyword id="KW-0479">Metal-binding</keyword>
<keyword id="KW-0547">Nucleotide-binding</keyword>
<keyword id="KW-0862">Zinc</keyword>
<gene>
    <name evidence="1" type="primary">clpX</name>
    <name type="ordered locus">SAB1534c</name>
</gene>